<accession>O27710</accession>
<proteinExistence type="inferred from homology"/>
<organism>
    <name type="scientific">Methanothermobacter thermautotrophicus (strain ATCC 29096 / DSM 1053 / JCM 10044 / NBRC 100330 / Delta H)</name>
    <name type="common">Methanobacterium thermoautotrophicum</name>
    <dbReference type="NCBI Taxonomy" id="187420"/>
    <lineage>
        <taxon>Archaea</taxon>
        <taxon>Methanobacteriati</taxon>
        <taxon>Methanobacteriota</taxon>
        <taxon>Methanomada group</taxon>
        <taxon>Methanobacteria</taxon>
        <taxon>Methanobacteriales</taxon>
        <taxon>Methanobacteriaceae</taxon>
        <taxon>Methanothermobacter</taxon>
    </lineage>
</organism>
<gene>
    <name type="primary">comA</name>
    <name type="ordered locus">MTH_1674</name>
</gene>
<feature type="chain" id="PRO_0000080831" description="Phosphosulfolactate synthase">
    <location>
        <begin position="1"/>
        <end position="258"/>
    </location>
</feature>
<reference key="1">
    <citation type="journal article" date="1997" name="J. Bacteriol.">
        <title>Complete genome sequence of Methanobacterium thermoautotrophicum deltaH: functional analysis and comparative genomics.</title>
        <authorList>
            <person name="Smith D.R."/>
            <person name="Doucette-Stamm L.A."/>
            <person name="Deloughery C."/>
            <person name="Lee H.-M."/>
            <person name="Dubois J."/>
            <person name="Aldredge T."/>
            <person name="Bashirzadeh R."/>
            <person name="Blakely D."/>
            <person name="Cook R."/>
            <person name="Gilbert K."/>
            <person name="Harrison D."/>
            <person name="Hoang L."/>
            <person name="Keagle P."/>
            <person name="Lumm W."/>
            <person name="Pothier B."/>
            <person name="Qiu D."/>
            <person name="Spadafora R."/>
            <person name="Vicare R."/>
            <person name="Wang Y."/>
            <person name="Wierzbowski J."/>
            <person name="Gibson R."/>
            <person name="Jiwani N."/>
            <person name="Caruso A."/>
            <person name="Bush D."/>
            <person name="Safer H."/>
            <person name="Patwell D."/>
            <person name="Prabhakar S."/>
            <person name="McDougall S."/>
            <person name="Shimer G."/>
            <person name="Goyal A."/>
            <person name="Pietrovski S."/>
            <person name="Church G.M."/>
            <person name="Daniels C.J."/>
            <person name="Mao J.-I."/>
            <person name="Rice P."/>
            <person name="Noelling J."/>
            <person name="Reeve J.N."/>
        </authorList>
    </citation>
    <scope>NUCLEOTIDE SEQUENCE [LARGE SCALE GENOMIC DNA]</scope>
    <source>
        <strain>ATCC 29096 / DSM 1053 / JCM 10044 / NBRC 100330 / Delta H</strain>
    </source>
</reference>
<protein>
    <recommendedName>
        <fullName>Phosphosulfolactate synthase</fullName>
        <ecNumber>4.4.1.19</ecNumber>
    </recommendedName>
    <alternativeName>
        <fullName>(2R)-phospho-3-sulfolactate synthase</fullName>
        <shortName>PSL synthase</shortName>
    </alternativeName>
</protein>
<evidence type="ECO:0000250" key="1"/>
<evidence type="ECO:0000305" key="2"/>
<comment type="function">
    <text evidence="1">Catalyzes the addition of sulfite to phosphoenolpyruvate (PEP) to yield (2R)-phospho-3-sulfolactate (PSL).</text>
</comment>
<comment type="catalytic activity">
    <reaction>
        <text>(2R)-O-phospho-3-sulfolactate = phosphoenolpyruvate + sulfite + H(+)</text>
        <dbReference type="Rhea" id="RHEA:22784"/>
        <dbReference type="ChEBI" id="CHEBI:15378"/>
        <dbReference type="ChEBI" id="CHEBI:15597"/>
        <dbReference type="ChEBI" id="CHEBI:17359"/>
        <dbReference type="ChEBI" id="CHEBI:58702"/>
        <dbReference type="EC" id="4.4.1.19"/>
    </reaction>
</comment>
<comment type="pathway">
    <text>Cofactor biosynthesis; coenzyme M biosynthesis; sulfoacetaldehyde from phosphoenolpyruvate and sulfite: step 1/4.</text>
</comment>
<comment type="similarity">
    <text evidence="2">Belongs to the phosphosulfolactate synthase family.</text>
</comment>
<keyword id="KW-0174">Coenzyme M biosynthesis</keyword>
<keyword id="KW-0456">Lyase</keyword>
<keyword id="KW-1185">Reference proteome</keyword>
<dbReference type="EC" id="4.4.1.19"/>
<dbReference type="EMBL" id="AE000666">
    <property type="protein sequence ID" value="AAB86146.1"/>
    <property type="molecule type" value="Genomic_DNA"/>
</dbReference>
<dbReference type="PIR" id="G69090">
    <property type="entry name" value="G69090"/>
</dbReference>
<dbReference type="RefSeq" id="WP_010877281.1">
    <property type="nucleotide sequence ID" value="NC_000916.1"/>
</dbReference>
<dbReference type="SMR" id="O27710"/>
<dbReference type="FunCoup" id="O27710">
    <property type="interactions" value="90"/>
</dbReference>
<dbReference type="STRING" id="187420.MTH_1674"/>
<dbReference type="PaxDb" id="187420-MTH_1674"/>
<dbReference type="EnsemblBacteria" id="AAB86146">
    <property type="protein sequence ID" value="AAB86146"/>
    <property type="gene ID" value="MTH_1674"/>
</dbReference>
<dbReference type="GeneID" id="1470759"/>
<dbReference type="GeneID" id="77402192"/>
<dbReference type="KEGG" id="mth:MTH_1674"/>
<dbReference type="PATRIC" id="fig|187420.15.peg.1634"/>
<dbReference type="HOGENOM" id="CLU_062679_2_0_2"/>
<dbReference type="InParanoid" id="O27710"/>
<dbReference type="UniPathway" id="UPA00355">
    <property type="reaction ID" value="UER00469"/>
</dbReference>
<dbReference type="Proteomes" id="UP000005223">
    <property type="component" value="Chromosome"/>
</dbReference>
<dbReference type="GO" id="GO:0043817">
    <property type="term" value="F:phosphosulfolactate synthase activity"/>
    <property type="evidence" value="ECO:0007669"/>
    <property type="project" value="UniProtKB-EC"/>
</dbReference>
<dbReference type="GO" id="GO:0019295">
    <property type="term" value="P:coenzyme M biosynthetic process"/>
    <property type="evidence" value="ECO:0007669"/>
    <property type="project" value="UniProtKB-UniPathway"/>
</dbReference>
<dbReference type="Gene3D" id="3.20.20.70">
    <property type="entry name" value="Aldolase class I"/>
    <property type="match status" value="1"/>
</dbReference>
<dbReference type="InterPro" id="IPR013785">
    <property type="entry name" value="Aldolase_TIM"/>
</dbReference>
<dbReference type="InterPro" id="IPR022370">
    <property type="entry name" value="Arch_ComA"/>
</dbReference>
<dbReference type="InterPro" id="IPR003830">
    <property type="entry name" value="ComA_synth"/>
</dbReference>
<dbReference type="InterPro" id="IPR036112">
    <property type="entry name" value="ComA_synth_sf"/>
</dbReference>
<dbReference type="NCBIfam" id="TIGR03849">
    <property type="entry name" value="arch_ComA"/>
    <property type="match status" value="1"/>
</dbReference>
<dbReference type="PANTHER" id="PTHR48413">
    <property type="match status" value="1"/>
</dbReference>
<dbReference type="PANTHER" id="PTHR48413:SF1">
    <property type="entry name" value="PROTEIN HEAT-STRESS-ASSOCIATED 32"/>
    <property type="match status" value="1"/>
</dbReference>
<dbReference type="Pfam" id="PF02679">
    <property type="entry name" value="ComA"/>
    <property type="match status" value="1"/>
</dbReference>
<dbReference type="SUPFAM" id="SSF102110">
    <property type="entry name" value="(2r)-phospho-3-sulfolactate synthase ComA"/>
    <property type="match status" value="1"/>
</dbReference>
<sequence length="258" mass="29409">MNAFDFLTPPRSGKPRKNGITMVLDKGMGPASARDLMEISSDYVDFIKFGWGTLPLHRRDTVKEKVDMYRSFDVEPYPGGTLFEIAHLNDKVEEYFQEARSLGFETLEISNGTVEIETEEKCRLIEMAVDEGFMVLSEVGKKDPERDRLLEPDDRVRLVRADLRAGASMVLMEARESGQNIGIYDERGNIREDEFNHLTDRLPMDRIIWEAPQKSQQVYFILKIGPDVNLGNIPPEEITALETIRRGLRGDTLGKVNL</sequence>
<name>PSLS_METTH</name>